<dbReference type="EMBL" id="X70498">
    <property type="protein sequence ID" value="CAA49906.1"/>
    <property type="molecule type" value="mRNA"/>
</dbReference>
<dbReference type="PIR" id="S29483">
    <property type="entry name" value="S29483"/>
</dbReference>
<dbReference type="PDB" id="2Z73">
    <property type="method" value="X-ray"/>
    <property type="resolution" value="2.50 A"/>
    <property type="chains" value="A/B=1-448"/>
</dbReference>
<dbReference type="PDB" id="2ZIY">
    <property type="method" value="X-ray"/>
    <property type="resolution" value="3.70 A"/>
    <property type="chains" value="A=2-373"/>
</dbReference>
<dbReference type="PDB" id="3AYM">
    <property type="method" value="X-ray"/>
    <property type="resolution" value="2.80 A"/>
    <property type="chains" value="A/B=1-448"/>
</dbReference>
<dbReference type="PDB" id="3AYN">
    <property type="method" value="X-ray"/>
    <property type="resolution" value="2.70 A"/>
    <property type="chains" value="A/B=1-448"/>
</dbReference>
<dbReference type="PDB" id="4WW3">
    <property type="method" value="X-ray"/>
    <property type="resolution" value="2.80 A"/>
    <property type="chains" value="A/B=9-358"/>
</dbReference>
<dbReference type="PDBsum" id="2Z73"/>
<dbReference type="PDBsum" id="2ZIY"/>
<dbReference type="PDBsum" id="3AYM"/>
<dbReference type="PDBsum" id="3AYN"/>
<dbReference type="PDBsum" id="4WW3"/>
<dbReference type="SMR" id="P31356"/>
<dbReference type="DIP" id="DIP-60624N"/>
<dbReference type="GlyConnect" id="524">
    <property type="glycosylation" value="4 N-Linked glycans"/>
</dbReference>
<dbReference type="GlyCosmos" id="P31356">
    <property type="glycosylation" value="1 site, 7 glycans"/>
</dbReference>
<dbReference type="iPTMnet" id="P31356"/>
<dbReference type="EvolutionaryTrace" id="P31356"/>
<dbReference type="GO" id="GO:0042995">
    <property type="term" value="C:cell projection"/>
    <property type="evidence" value="ECO:0007669"/>
    <property type="project" value="UniProtKB-KW"/>
</dbReference>
<dbReference type="GO" id="GO:0016020">
    <property type="term" value="C:membrane"/>
    <property type="evidence" value="ECO:0000314"/>
    <property type="project" value="UniProtKB"/>
</dbReference>
<dbReference type="GO" id="GO:0005886">
    <property type="term" value="C:plasma membrane"/>
    <property type="evidence" value="ECO:0000250"/>
    <property type="project" value="UniProtKB"/>
</dbReference>
<dbReference type="GO" id="GO:0004930">
    <property type="term" value="F:G protein-coupled receptor activity"/>
    <property type="evidence" value="ECO:0007669"/>
    <property type="project" value="UniProtKB-KW"/>
</dbReference>
<dbReference type="GO" id="GO:0009881">
    <property type="term" value="F:photoreceptor activity"/>
    <property type="evidence" value="ECO:0007669"/>
    <property type="project" value="UniProtKB-KW"/>
</dbReference>
<dbReference type="GO" id="GO:0016918">
    <property type="term" value="F:retinal binding"/>
    <property type="evidence" value="ECO:0000314"/>
    <property type="project" value="UniProtKB"/>
</dbReference>
<dbReference type="GO" id="GO:0007602">
    <property type="term" value="P:phototransduction"/>
    <property type="evidence" value="ECO:0007669"/>
    <property type="project" value="UniProtKB-KW"/>
</dbReference>
<dbReference type="GO" id="GO:0007601">
    <property type="term" value="P:visual perception"/>
    <property type="evidence" value="ECO:0007669"/>
    <property type="project" value="UniProtKB-KW"/>
</dbReference>
<dbReference type="CDD" id="cd15337">
    <property type="entry name" value="7tmA_Opsin_Gq_invertebrates"/>
    <property type="match status" value="1"/>
</dbReference>
<dbReference type="FunFam" id="1.20.1070.10:FF:000044">
    <property type="entry name" value="Opsin, ultraviolet-sensitive"/>
    <property type="match status" value="1"/>
</dbReference>
<dbReference type="Gene3D" id="1.20.1070.10">
    <property type="entry name" value="Rhodopsin 7-helix transmembrane proteins"/>
    <property type="match status" value="1"/>
</dbReference>
<dbReference type="InterPro" id="IPR050125">
    <property type="entry name" value="GPCR_opsins"/>
</dbReference>
<dbReference type="InterPro" id="IPR000276">
    <property type="entry name" value="GPCR_Rhodpsn"/>
</dbReference>
<dbReference type="InterPro" id="IPR017452">
    <property type="entry name" value="GPCR_Rhodpsn_7TM"/>
</dbReference>
<dbReference type="InterPro" id="IPR001760">
    <property type="entry name" value="Opsin"/>
</dbReference>
<dbReference type="InterPro" id="IPR027430">
    <property type="entry name" value="Retinal_BS"/>
</dbReference>
<dbReference type="InterPro" id="IPR006031">
    <property type="entry name" value="XYPPX"/>
</dbReference>
<dbReference type="PANTHER" id="PTHR24240">
    <property type="entry name" value="OPSIN"/>
    <property type="match status" value="1"/>
</dbReference>
<dbReference type="Pfam" id="PF00001">
    <property type="entry name" value="7tm_1"/>
    <property type="match status" value="1"/>
</dbReference>
<dbReference type="Pfam" id="PF02162">
    <property type="entry name" value="XYPPX"/>
    <property type="match status" value="4"/>
</dbReference>
<dbReference type="PRINTS" id="PR00237">
    <property type="entry name" value="GPCRRHODOPSN"/>
</dbReference>
<dbReference type="PRINTS" id="PR00238">
    <property type="entry name" value="OPSIN"/>
</dbReference>
<dbReference type="PRINTS" id="PR00239">
    <property type="entry name" value="RHODOPSNTAIL"/>
</dbReference>
<dbReference type="SMART" id="SM01381">
    <property type="entry name" value="7TM_GPCR_Srsx"/>
    <property type="match status" value="1"/>
</dbReference>
<dbReference type="SUPFAM" id="SSF81321">
    <property type="entry name" value="Family A G protein-coupled receptor-like"/>
    <property type="match status" value="1"/>
</dbReference>
<dbReference type="PROSITE" id="PS00237">
    <property type="entry name" value="G_PROTEIN_RECEP_F1_1"/>
    <property type="match status" value="1"/>
</dbReference>
<dbReference type="PROSITE" id="PS50262">
    <property type="entry name" value="G_PROTEIN_RECEP_F1_2"/>
    <property type="match status" value="1"/>
</dbReference>
<dbReference type="PROSITE" id="PS00238">
    <property type="entry name" value="OPSIN"/>
    <property type="match status" value="1"/>
</dbReference>
<accession>P31356</accession>
<evidence type="ECO:0000250" key="1">
    <source>
        <dbReference type="UniProtKB" id="P02699"/>
    </source>
</evidence>
<evidence type="ECO:0000250" key="2">
    <source>
        <dbReference type="UniProtKB" id="P08100"/>
    </source>
</evidence>
<evidence type="ECO:0000255" key="3">
    <source>
        <dbReference type="PROSITE-ProRule" id="PRU00521"/>
    </source>
</evidence>
<evidence type="ECO:0000256" key="4">
    <source>
        <dbReference type="SAM" id="MobiDB-lite"/>
    </source>
</evidence>
<evidence type="ECO:0000269" key="5">
    <source>
    </source>
</evidence>
<evidence type="ECO:0000269" key="6">
    <source>
    </source>
</evidence>
<evidence type="ECO:0000269" key="7">
    <source>
    </source>
</evidence>
<evidence type="ECO:0000269" key="8">
    <source>
    </source>
</evidence>
<evidence type="ECO:0000269" key="9">
    <source>
    </source>
</evidence>
<evidence type="ECO:0000269" key="10">
    <source>
    </source>
</evidence>
<evidence type="ECO:0000269" key="11">
    <source>
    </source>
</evidence>
<evidence type="ECO:0000305" key="12"/>
<evidence type="ECO:0000305" key="13">
    <source>
    </source>
</evidence>
<evidence type="ECO:0000305" key="14">
    <source>
    </source>
</evidence>
<evidence type="ECO:0000305" key="15">
    <source>
    </source>
</evidence>
<evidence type="ECO:0000305" key="16">
    <source>
    </source>
</evidence>
<evidence type="ECO:0000305" key="17">
    <source>
    </source>
</evidence>
<evidence type="ECO:0007744" key="18">
    <source>
        <dbReference type="PDB" id="2Z73"/>
    </source>
</evidence>
<evidence type="ECO:0007744" key="19">
    <source>
        <dbReference type="PDB" id="2ZIY"/>
    </source>
</evidence>
<evidence type="ECO:0007744" key="20">
    <source>
        <dbReference type="PDB" id="3AYM"/>
    </source>
</evidence>
<evidence type="ECO:0007744" key="21">
    <source>
        <dbReference type="PDB" id="3AYN"/>
    </source>
</evidence>
<evidence type="ECO:0007744" key="22">
    <source>
        <dbReference type="PDB" id="4WW3"/>
    </source>
</evidence>
<evidence type="ECO:0007829" key="23">
    <source>
        <dbReference type="PDB" id="2Z73"/>
    </source>
</evidence>
<evidence type="ECO:0007829" key="24">
    <source>
        <dbReference type="PDB" id="4WW3"/>
    </source>
</evidence>
<comment type="function">
    <text evidence="2 12 13 14 15 16 17">Photoreceptor required for image-forming vision at low light intensity (Probable). Light-induced isomerization of 11-cis to all-trans retinal triggers a conformational change that activates signaling via G-proteins. Signaling mediates the activation of phospholipase C (Probable). Subsequent receptor phosphorylation mediates displacement of the bound G-protein alpha subunit by arrestin and terminates signaling (By similarity).</text>
</comment>
<comment type="subcellular location">
    <subcellularLocation>
        <location evidence="5 6 7 8 9">Cell projection</location>
        <location evidence="5 6 7 8 9">Rhabdomere membrane</location>
        <topology evidence="6 7 8 9">Multi-pass membrane protein</topology>
    </subcellularLocation>
</comment>
<comment type="tissue specificity">
    <text evidence="5 6 7">Retina, rhabdomere membrane of photoreceptor cells (at protein level).</text>
</comment>
<comment type="PTM">
    <text evidence="1 6 7 8 9 10">Contains one covalently linked retinal chromophore. Upon light absorption, the covalently bound 11-cis-retinal is converted to all-trans-retinal (PubMed:17554166, PubMed:18463093, PubMed:18480818, PubMed:21906602, PubMed:3191148). After hydrolysis of the Schiff base and release of the covalently bound all-trans-retinal, active rhodopsin is regenerated by binding of a fresh molecule of 11-cis-retinal (By similarity).</text>
</comment>
<comment type="similarity">
    <text evidence="3">Belongs to the G-protein coupled receptor 1 family. Opsin subfamily.</text>
</comment>
<keyword id="KW-0002">3D-structure</keyword>
<keyword id="KW-1003">Cell membrane</keyword>
<keyword id="KW-0966">Cell projection</keyword>
<keyword id="KW-0157">Chromophore</keyword>
<keyword id="KW-0903">Direct protein sequencing</keyword>
<keyword id="KW-1015">Disulfide bond</keyword>
<keyword id="KW-0297">G-protein coupled receptor</keyword>
<keyword id="KW-0325">Glycoprotein</keyword>
<keyword id="KW-0449">Lipoprotein</keyword>
<keyword id="KW-0472">Membrane</keyword>
<keyword id="KW-0564">Palmitate</keyword>
<keyword id="KW-0597">Phosphoprotein</keyword>
<keyword id="KW-0600">Photoreceptor protein</keyword>
<keyword id="KW-0675">Receptor</keyword>
<keyword id="KW-0681">Retinal protein</keyword>
<keyword id="KW-0716">Sensory transduction</keyword>
<keyword id="KW-0807">Transducer</keyword>
<keyword id="KW-0812">Transmembrane</keyword>
<keyword id="KW-1133">Transmembrane helix</keyword>
<keyword id="KW-0844">Vision</keyword>
<name>OPSD_TODPA</name>
<gene>
    <name type="primary">RHO</name>
</gene>
<sequence>MGRDLRDNETWWYNPSIVVHPHWREFDQVPDAVYYSLGIFIGICGIIGCGGNGIVIYLFTKTKSLQTPANMFIINLAFSDFTFSLVNGFPLMTISCFLKKWIFGFAACKVYGFIGGIFGFMSIMTMAMISIDRYNVIGRPMAASKKMSHRRAFIMIIFVWLWSVLWAIGPIFGWGAYTLEGVLCNCSFDYISRDSTTRSNILCMFILGFFGPILIIFFCYFNIVMSVSNHEKEMAAMAKRLNAKELRKAQAGANAEMRLAKISIVIVSQFLLSWSPYAVVALLAQFGPLEWVTPYAAQLPVMFAKASAIHNPMIYSVSHPKFREAISQTFPWVLTCCQFDDKETEDDKDAETEIPAGESSDAAPSADAAQMKEMMAMMQKMQQQQAAYPPQGYAPPPQGYPPQGYPPQGYPPQGYPPQGYPPPPQGAPPQGAPPAAPPQGVDNQAYQA</sequence>
<organism>
    <name type="scientific">Todarodes pacificus</name>
    <name type="common">Japanese flying squid</name>
    <name type="synonym">Ommastrephes pacificus</name>
    <dbReference type="NCBI Taxonomy" id="6637"/>
    <lineage>
        <taxon>Eukaryota</taxon>
        <taxon>Metazoa</taxon>
        <taxon>Spiralia</taxon>
        <taxon>Lophotrochozoa</taxon>
        <taxon>Mollusca</taxon>
        <taxon>Cephalopoda</taxon>
        <taxon>Coleoidea</taxon>
        <taxon>Decapodiformes</taxon>
        <taxon>Oegopsida</taxon>
        <taxon>Ommastrephidae</taxon>
        <taxon>Todarodes</taxon>
    </lineage>
</organism>
<reference key="1">
    <citation type="journal article" date="1993" name="FEBS Lett.">
        <title>Cloning and nucleotide sequence of cDNA for rhodopsin of the squid Todarodes pacificus.</title>
        <authorList>
            <person name="Hara-Nishimura I."/>
            <person name="Kondo M."/>
            <person name="Nishimura M."/>
            <person name="Hara R."/>
            <person name="Hara T."/>
        </authorList>
    </citation>
    <scope>NUCLEOTIDE SEQUENCE [MRNA]</scope>
    <scope>PROTEIN SEQUENCE OF 2-17; 129-140 AND 303-313</scope>
    <source>
        <tissue>Retina</tissue>
    </source>
</reference>
<reference key="2">
    <citation type="journal article" date="1988" name="Biochim. Biophys. Acta">
        <title>Amino acid sequence of the retinal binding site of squid visual pigment.</title>
        <authorList>
            <person name="Seidou M."/>
            <person name="Kubota I."/>
            <person name="Hiraki K."/>
            <person name="Kito Y."/>
        </authorList>
    </citation>
    <scope>PROTEIN SEQUENCE OF 303-313</scope>
    <scope>RETINAL-CHROMOPHORE BINDING AT LYS-305</scope>
</reference>
<reference key="3">
    <citation type="journal article" date="2007" name="Acta Crystallogr. F">
        <title>Crystallization and crystal properties of squid rhodopsin.</title>
        <authorList>
            <person name="Murakami M."/>
            <person name="Kitahara R."/>
            <person name="Gotoh T."/>
            <person name="Kouyama T."/>
        </authorList>
    </citation>
    <scope>FUNCTION</scope>
    <scope>CRYSTALLIZATION</scope>
    <scope>TISSUE SPECIFICITY</scope>
    <scope>SUBCELLULAR LOCATION</scope>
</reference>
<reference evidence="19" key="4">
    <citation type="journal article" date="2008" name="J. Biol. Chem.">
        <title>Crystal structure of squid rhodopsin with intracellularly extended cytoplasmic region.</title>
        <authorList>
            <person name="Shimamura T."/>
            <person name="Hiraki K."/>
            <person name="Takahashi N."/>
            <person name="Hori T."/>
            <person name="Ago H."/>
            <person name="Masuda K."/>
            <person name="Takio K."/>
            <person name="Ishiguro M."/>
            <person name="Miyano M."/>
        </authorList>
    </citation>
    <scope>X-RAY CRYSTALLOGRAPHY (3.70 ANGSTROMS) OF 2-373 IN COMPLEX WITH ALL-TRANS-RETINAL</scope>
    <scope>FUNCTION</scope>
    <scope>DISULFIDE BONDS</scope>
    <scope>SUBCELLULAR LOCATION</scope>
    <scope>TOPOLOGY</scope>
    <scope>TISSUE SPECIFICITY</scope>
    <scope>IDENTIFICATION BY MASS SPECTROMETRY</scope>
    <scope>PALMITOYLATION AT CYS-336 AND CYS-337</scope>
</reference>
<reference evidence="18" key="5">
    <citation type="journal article" date="2008" name="Nature">
        <title>Crystal structure of squid rhodopsin.</title>
        <authorList>
            <person name="Murakami M."/>
            <person name="Kouyama T."/>
        </authorList>
    </citation>
    <scope>X-RAY CRYSTALLOGRAPHY (2.50 ANGSTROMS) IN COMPLEX WITH ALL-TRANS-RETINAL</scope>
    <scope>FUNCTION</scope>
    <scope>SUBCELLULAR LOCATION</scope>
    <scope>TISSUE SPECIFICITY</scope>
    <scope>PALMITOYLATION AT CYS-337</scope>
    <scope>GLYCOSYLATION AT ASN-8</scope>
    <scope>DISULFIDE BONDS</scope>
    <scope>TOPOLOGY</scope>
</reference>
<reference evidence="20 21" key="6">
    <citation type="journal article" date="2011" name="J. Mol. Biol.">
        <title>Crystallographic analysis of the primary photochemical reaction of squid rhodopsin.</title>
        <authorList>
            <person name="Murakami M."/>
            <person name="Kouyama T."/>
        </authorList>
    </citation>
    <scope>X-RAY CRYSTALLOGRAPHY (2.70 ANGSTROMS) IN COMPLEX WITH ALL-TRANS-RETINAL</scope>
    <scope>FUNCTION</scope>
    <scope>DISULFIDE BONDS</scope>
</reference>
<reference evidence="22" key="7">
    <citation type="journal article" date="2015" name="PLoS ONE">
        <title>Crystallographic Study of the LUMI Intermediate of Squid Rhodopsin.</title>
        <authorList>
            <person name="Murakami M."/>
            <person name="Kouyama T."/>
        </authorList>
    </citation>
    <scope>X-RAY CRYSTALLOGRAPHY (2.80 ANGSTROMS) OF 9-358 IN COMPLEX WITH ALL-TRANS-RETINAL</scope>
    <scope>FUNCTION</scope>
    <scope>DISULFIDE BONDS</scope>
</reference>
<feature type="initiator methionine" description="Removed" evidence="11">
    <location>
        <position position="1"/>
    </location>
</feature>
<feature type="chain" id="PRO_0000197748" description="Rhodopsin">
    <location>
        <begin position="2"/>
        <end position="448"/>
    </location>
</feature>
<feature type="topological domain" description="Extracellular" evidence="6 7 8 9">
    <location>
        <begin position="2"/>
        <end position="33"/>
    </location>
</feature>
<feature type="transmembrane region" description="Helical; Name=1" evidence="6 7 8 9">
    <location>
        <begin position="34"/>
        <end position="58"/>
    </location>
</feature>
<feature type="topological domain" description="Cytoplasmic" evidence="6 7 8 9">
    <location>
        <begin position="59"/>
        <end position="70"/>
    </location>
</feature>
<feature type="transmembrane region" description="Helical; Name=2" evidence="6 7 8 9">
    <location>
        <begin position="71"/>
        <end position="97"/>
    </location>
</feature>
<feature type="topological domain" description="Extracellular" evidence="6 7 8 9">
    <location>
        <begin position="98"/>
        <end position="109"/>
    </location>
</feature>
<feature type="transmembrane region" description="Helical; Name=3" evidence="6 7 8 9">
    <location>
        <begin position="110"/>
        <end position="131"/>
    </location>
</feature>
<feature type="topological domain" description="Cytoplasmic" evidence="6 7 8 9">
    <location>
        <begin position="132"/>
        <end position="151"/>
    </location>
</feature>
<feature type="transmembrane region" description="Helical; Name=4" evidence="6 7 8 9">
    <location>
        <begin position="152"/>
        <end position="172"/>
    </location>
</feature>
<feature type="topological domain" description="Extracellular" evidence="6 7 8 9">
    <location>
        <begin position="173"/>
        <end position="199"/>
    </location>
</feature>
<feature type="transmembrane region" description="Helical; Name=5" evidence="6 7 8 9">
    <location>
        <begin position="200"/>
        <end position="224"/>
    </location>
</feature>
<feature type="topological domain" description="Cytoplasmic" evidence="6 7 8 9">
    <location>
        <begin position="225"/>
        <end position="261"/>
    </location>
</feature>
<feature type="transmembrane region" description="Helical; Name=6" evidence="6 7 8 9">
    <location>
        <begin position="262"/>
        <end position="283"/>
    </location>
</feature>
<feature type="topological domain" description="Extracellular" evidence="6 7 8 9">
    <location>
        <begin position="284"/>
        <end position="293"/>
    </location>
</feature>
<feature type="transmembrane region" description="Helical; Name=7" evidence="6 7 8 9">
    <location>
        <begin position="294"/>
        <end position="315"/>
    </location>
</feature>
<feature type="topological domain" description="Cytoplasmic" evidence="6 7 8 9">
    <location>
        <begin position="316"/>
        <end position="448"/>
    </location>
</feature>
<feature type="region of interest" description="Disordered" evidence="4">
    <location>
        <begin position="343"/>
        <end position="448"/>
    </location>
</feature>
<feature type="compositionally biased region" description="Acidic residues" evidence="4">
    <location>
        <begin position="343"/>
        <end position="352"/>
    </location>
</feature>
<feature type="compositionally biased region" description="Low complexity" evidence="4">
    <location>
        <begin position="359"/>
        <end position="391"/>
    </location>
</feature>
<feature type="compositionally biased region" description="Pro residues" evidence="4">
    <location>
        <begin position="392"/>
        <end position="437"/>
    </location>
</feature>
<feature type="modified residue" description="N6-(retinylidene)lysine" evidence="6 7 8 9 10 18 22">
    <location>
        <position position="305"/>
    </location>
</feature>
<feature type="lipid moiety-binding region" description="S-palmitoyl cysteine" evidence="6 19">
    <location>
        <position position="336"/>
    </location>
</feature>
<feature type="lipid moiety-binding region" description="S-palmitoyl cysteine" evidence="6 7 19">
    <location>
        <position position="337"/>
    </location>
</feature>
<feature type="glycosylation site" description="N-linked (GlcNAc...) asparagine" evidence="14">
    <location>
        <position position="8"/>
    </location>
</feature>
<feature type="disulfide bond" evidence="3 6 7 8 9 18 19 20 21 22">
    <location>
        <begin position="108"/>
        <end position="186"/>
    </location>
</feature>
<feature type="strand" evidence="23">
    <location>
        <begin position="15"/>
        <end position="17"/>
    </location>
</feature>
<feature type="helix" evidence="23">
    <location>
        <begin position="21"/>
        <end position="24"/>
    </location>
</feature>
<feature type="helix" evidence="23">
    <location>
        <begin position="31"/>
        <end position="61"/>
    </location>
</feature>
<feature type="helix" evidence="24">
    <location>
        <begin position="63"/>
        <end position="65"/>
    </location>
</feature>
<feature type="helix" evidence="23">
    <location>
        <begin position="70"/>
        <end position="87"/>
    </location>
</feature>
<feature type="helix" evidence="23">
    <location>
        <begin position="91"/>
        <end position="97"/>
    </location>
</feature>
<feature type="helix" evidence="23">
    <location>
        <begin position="104"/>
        <end position="136"/>
    </location>
</feature>
<feature type="turn" evidence="23">
    <location>
        <begin position="141"/>
        <end position="143"/>
    </location>
</feature>
<feature type="helix" evidence="23">
    <location>
        <begin position="149"/>
        <end position="167"/>
    </location>
</feature>
<feature type="helix" evidence="23">
    <location>
        <begin position="169"/>
        <end position="172"/>
    </location>
</feature>
<feature type="strand" evidence="23">
    <location>
        <begin position="177"/>
        <end position="179"/>
    </location>
</feature>
<feature type="strand" evidence="23">
    <location>
        <begin position="183"/>
        <end position="188"/>
    </location>
</feature>
<feature type="helix" evidence="23">
    <location>
        <begin position="195"/>
        <end position="207"/>
    </location>
</feature>
<feature type="helix" evidence="23">
    <location>
        <begin position="210"/>
        <end position="224"/>
    </location>
</feature>
<feature type="helix" evidence="23">
    <location>
        <begin position="227"/>
        <end position="238"/>
    </location>
</feature>
<feature type="turn" evidence="23">
    <location>
        <begin position="239"/>
        <end position="241"/>
    </location>
</feature>
<feature type="helix" evidence="23">
    <location>
        <begin position="246"/>
        <end position="286"/>
    </location>
</feature>
<feature type="helix" evidence="23">
    <location>
        <begin position="289"/>
        <end position="291"/>
    </location>
</feature>
<feature type="helix" evidence="23">
    <location>
        <begin position="294"/>
        <end position="306"/>
    </location>
</feature>
<feature type="helix" evidence="23">
    <location>
        <begin position="307"/>
        <end position="309"/>
    </location>
</feature>
<feature type="helix" evidence="23">
    <location>
        <begin position="311"/>
        <end position="318"/>
    </location>
</feature>
<feature type="helix" evidence="23">
    <location>
        <begin position="320"/>
        <end position="329"/>
    </location>
</feature>
<feature type="helix" evidence="23">
    <location>
        <begin position="331"/>
        <end position="334"/>
    </location>
</feature>
<feature type="helix" evidence="23">
    <location>
        <begin position="341"/>
        <end position="344"/>
    </location>
</feature>
<feature type="helix" evidence="23">
    <location>
        <begin position="345"/>
        <end position="351"/>
    </location>
</feature>
<feature type="helix" evidence="24">
    <location>
        <begin position="355"/>
        <end position="357"/>
    </location>
</feature>
<proteinExistence type="evidence at protein level"/>
<protein>
    <recommendedName>
        <fullName>Rhodopsin</fullName>
    </recommendedName>
</protein>